<sequence length="330" mass="37132">MNSSTDPTSDETIWDLSPYIKIFKDGRVERLHNSPYVPPSLNDPETGVSWKDVPISSQVSARVYIPKISDHEKLPIFVYVHGAGFCLESAFRSFFHTFVKHFVAETKVIGVSIEYRLAPEHLLPAAYEDCWEALQWVASHVGLDNSGLKTAIDKDPWIINYGDFDRLYLAGDSPGANIVHNTLIRAGKEKLKGGVKILGAILYYPYFIIPTSTKLSDDFEYNYTCYWKLAYPNAPGGMNNPMINPIAENAPDLAGYGCSRLLVTLVSMISTTPDETKDINAVYIEALEKSGWKGELEVADFDADYFELFTLETEMGKNMFRRLASFIKHE</sequence>
<keyword id="KW-0002">3D-structure</keyword>
<keyword id="KW-0017">Alkaloid metabolism</keyword>
<keyword id="KW-0963">Cytoplasm</keyword>
<keyword id="KW-0413">Isomerase</keyword>
<keyword id="KW-0539">Nucleus</keyword>
<organism>
    <name type="scientific">Catharanthus roseus</name>
    <name type="common">Madagascar periwinkle</name>
    <name type="synonym">Vinca rosea</name>
    <dbReference type="NCBI Taxonomy" id="4058"/>
    <lineage>
        <taxon>Eukaryota</taxon>
        <taxon>Viridiplantae</taxon>
        <taxon>Streptophyta</taxon>
        <taxon>Embryophyta</taxon>
        <taxon>Tracheophyta</taxon>
        <taxon>Spermatophyta</taxon>
        <taxon>Magnoliopsida</taxon>
        <taxon>eudicotyledons</taxon>
        <taxon>Gunneridae</taxon>
        <taxon>Pentapetalae</taxon>
        <taxon>asterids</taxon>
        <taxon>lamiids</taxon>
        <taxon>Gentianales</taxon>
        <taxon>Apocynaceae</taxon>
        <taxon>Rauvolfioideae</taxon>
        <taxon>Vinceae</taxon>
        <taxon>Catharanthinae</taxon>
        <taxon>Catharanthus</taxon>
    </lineage>
</organism>
<dbReference type="EC" id="5.5.1.37" evidence="2 3 5"/>
<dbReference type="EMBL" id="MF770512">
    <property type="protein sequence ID" value="AVM85920.1"/>
    <property type="molecule type" value="mRNA"/>
</dbReference>
<dbReference type="PDB" id="6RT8">
    <property type="method" value="X-ray"/>
    <property type="resolution" value="2.19 A"/>
    <property type="chains" value="A/B/C/D/E/F/G/H=7-330"/>
</dbReference>
<dbReference type="PDBsum" id="6RT8"/>
<dbReference type="SMR" id="A0A2P1GIW2"/>
<dbReference type="ESTHER" id="catro-CS">
    <property type="family name" value="Plant_carboxylesterase"/>
</dbReference>
<dbReference type="KEGG" id="ag:AVM85920"/>
<dbReference type="BioCyc" id="MetaCyc:MONOMER-20642"/>
<dbReference type="GO" id="GO:0005829">
    <property type="term" value="C:cytosol"/>
    <property type="evidence" value="ECO:0000314"/>
    <property type="project" value="UniProtKB"/>
</dbReference>
<dbReference type="GO" id="GO:0005634">
    <property type="term" value="C:nucleus"/>
    <property type="evidence" value="ECO:0000314"/>
    <property type="project" value="UniProtKB"/>
</dbReference>
<dbReference type="GO" id="GO:0016787">
    <property type="term" value="F:hydrolase activity"/>
    <property type="evidence" value="ECO:0007669"/>
    <property type="project" value="InterPro"/>
</dbReference>
<dbReference type="GO" id="GO:0016853">
    <property type="term" value="F:isomerase activity"/>
    <property type="evidence" value="ECO:0000314"/>
    <property type="project" value="UniProtKB"/>
</dbReference>
<dbReference type="GO" id="GO:0009821">
    <property type="term" value="P:alkaloid biosynthetic process"/>
    <property type="evidence" value="ECO:0000314"/>
    <property type="project" value="UniProtKB"/>
</dbReference>
<dbReference type="GO" id="GO:0035834">
    <property type="term" value="P:indole alkaloid metabolic process"/>
    <property type="evidence" value="ECO:0000314"/>
    <property type="project" value="UniProtKB"/>
</dbReference>
<dbReference type="Gene3D" id="3.40.50.1820">
    <property type="entry name" value="alpha/beta hydrolase"/>
    <property type="match status" value="1"/>
</dbReference>
<dbReference type="InterPro" id="IPR013094">
    <property type="entry name" value="AB_hydrolase_3"/>
</dbReference>
<dbReference type="InterPro" id="IPR029058">
    <property type="entry name" value="AB_hydrolase_fold"/>
</dbReference>
<dbReference type="InterPro" id="IPR050466">
    <property type="entry name" value="Carboxylest/Gibb_receptor"/>
</dbReference>
<dbReference type="PANTHER" id="PTHR23024:SF551">
    <property type="entry name" value="2-HYDROXYISOFLAVANONE DEHYDRATASE-LIKE"/>
    <property type="match status" value="1"/>
</dbReference>
<dbReference type="PANTHER" id="PTHR23024">
    <property type="entry name" value="ARYLACETAMIDE DEACETYLASE"/>
    <property type="match status" value="1"/>
</dbReference>
<dbReference type="Pfam" id="PF07859">
    <property type="entry name" value="Abhydrolase_3"/>
    <property type="match status" value="1"/>
</dbReference>
<dbReference type="SUPFAM" id="SSF53474">
    <property type="entry name" value="alpha/beta-Hydrolases"/>
    <property type="match status" value="1"/>
</dbReference>
<name>CS_CATRO</name>
<accession>A0A2P1GIW2</accession>
<proteinExistence type="evidence at protein level"/>
<comment type="function">
    <text evidence="2 3 5">Component of iboga and aspidosperma monoterpenoid indole alkaloids (MIAs, e.g. tabersonine and catharanthine) biosynthesis pathway from 19E-geissoschizine, psychoactive compounds likely to be used in the treatment of opioid dependence (PubMed:29511102, PubMed:29724909, PubMed:32066966). Catalyzes the conversion of dehydrosecodine to catharanthine (PubMed:29511102, PubMed:29724909, PubMed:32066966).</text>
</comment>
<comment type="catalytic activity">
    <reaction evidence="2 3 5">
        <text>dehydrosecodine = catharanthine</text>
        <dbReference type="Rhea" id="RHEA:81311"/>
        <dbReference type="ChEBI" id="CHEBI:142675"/>
        <dbReference type="ChEBI" id="CHEBI:146237"/>
        <dbReference type="EC" id="5.5.1.37"/>
    </reaction>
    <physiologicalReaction direction="left-to-right" evidence="2 3 5">
        <dbReference type="Rhea" id="RHEA:81312"/>
    </physiologicalReaction>
</comment>
<comment type="biophysicochemical properties">
    <phDependence>
        <text evidence="5">Optimum pH is 9.5.</text>
    </phDependence>
</comment>
<comment type="pathway">
    <text evidence="2 5">Alkaloid biosynthesis.</text>
</comment>
<comment type="subunit">
    <text evidence="3">Interacts with dehydroprecondylocarpine acetate synthase (DPAS).</text>
</comment>
<comment type="subcellular location">
    <subcellularLocation>
        <location evidence="3">Cytoplasm</location>
        <location evidence="3">Cytosol</location>
    </subcellularLocation>
    <subcellularLocation>
        <location evidence="3">Nucleus</location>
    </subcellularLocation>
</comment>
<comment type="tissue specificity">
    <text evidence="3 4">Expressed in leaf epidermis.</text>
</comment>
<comment type="disruption phenotype">
    <text evidence="2 3">Reduced accumulation of catharanthine, increased biosynthesis of vindoline, but normal levels of ajmalicine.</text>
</comment>
<comment type="similarity">
    <text evidence="8">Belongs to the 'GDXG' lipolytic enzyme family.</text>
</comment>
<comment type="online information" name="ORCAE database">
    <link uri="https://orcae.psb.ugent.be/taxa/catro/regular/v1/"/>
</comment>
<evidence type="ECO:0000250" key="1">
    <source>
        <dbReference type="UniProtKB" id="Q5NUF3"/>
    </source>
</evidence>
<evidence type="ECO:0000269" key="2">
    <source>
    </source>
</evidence>
<evidence type="ECO:0000269" key="3">
    <source>
    </source>
</evidence>
<evidence type="ECO:0000269" key="4">
    <source>
    </source>
</evidence>
<evidence type="ECO:0000269" key="5">
    <source>
    </source>
</evidence>
<evidence type="ECO:0000303" key="6">
    <source>
    </source>
</evidence>
<evidence type="ECO:0000303" key="7">
    <source>
    </source>
</evidence>
<evidence type="ECO:0000305" key="8"/>
<evidence type="ECO:0000305" key="9">
    <source>
    </source>
</evidence>
<evidence type="ECO:0007744" key="10">
    <source>
        <dbReference type="PDB" id="6RT8"/>
    </source>
</evidence>
<evidence type="ECO:0007829" key="11">
    <source>
        <dbReference type="PDB" id="6RT8"/>
    </source>
</evidence>
<gene>
    <name evidence="7" type="primary">CS</name>
    <name evidence="6" type="synonym">HL1</name>
    <name evidence="8" type="ORF">Caros025416</name>
</gene>
<feature type="chain" id="PRO_0000446422" description="Catharanthine synthase">
    <location>
        <begin position="1"/>
        <end position="330"/>
    </location>
</feature>
<feature type="short sequence motif" description="Involved in the stabilization of the negatively charged intermediate by the formation of the oxyanion hole" evidence="1">
    <location>
        <begin position="81"/>
        <end position="83"/>
    </location>
</feature>
<feature type="active site" description="Proton acceptor" evidence="9">
    <location>
        <position position="173"/>
    </location>
</feature>
<feature type="active site" evidence="9">
    <location>
        <position position="274"/>
    </location>
</feature>
<feature type="active site" description="Proton donor/acceptor" evidence="9">
    <location>
        <position position="305"/>
    </location>
</feature>
<feature type="binding site" evidence="9 10">
    <location>
        <position position="84"/>
    </location>
    <ligand>
        <name>catharanthine</name>
        <dbReference type="ChEBI" id="CHEBI:142675"/>
    </ligand>
</feature>
<feature type="binding site" evidence="9 10">
    <location>
        <position position="305"/>
    </location>
    <ligand>
        <name>catharanthine</name>
        <dbReference type="ChEBI" id="CHEBI:142675"/>
    </ligand>
</feature>
<feature type="mutagenesis site" description="Abolished activity." evidence="5">
    <original>Y</original>
    <variation>F</variation>
    <location>
        <position position="79"/>
    </location>
</feature>
<feature type="mutagenesis site" description="Abolished activity." evidence="5">
    <original>H</original>
    <variation>A</variation>
    <variation>N</variation>
    <location>
        <position position="81"/>
    </location>
</feature>
<feature type="mutagenesis site" description="Slightly reduced activity." evidence="5">
    <original>Y</original>
    <variation>F</variation>
    <location>
        <position position="115"/>
    </location>
</feature>
<feature type="mutagenesis site" description="Abolished activity. Abolished activity; when associated with A-173." evidence="5">
    <original>D</original>
    <variation>A</variation>
    <variation>N</variation>
    <location>
        <position position="172"/>
    </location>
</feature>
<feature type="mutagenesis site" description="Strongly reduced activity. Abolished activity; when associated with A-172 and N-172." evidence="5">
    <original>S</original>
    <variation>A</variation>
    <location>
        <position position="173"/>
    </location>
</feature>
<feature type="mutagenesis site" description="Abolished activity." evidence="5">
    <original>S</original>
    <variation>C</variation>
    <location>
        <position position="173"/>
    </location>
</feature>
<feature type="mutagenesis site" description="Slightly reduced activity." evidence="5">
    <original>P</original>
    <variation>T</variation>
    <location>
        <position position="174"/>
    </location>
</feature>
<feature type="mutagenesis site" description="Strongly reduced activity." evidence="5">
    <original>Y</original>
    <variation>F</variation>
    <location>
        <position position="204"/>
    </location>
</feature>
<feature type="mutagenesis site" description="Strongly reduced activity." evidence="5">
    <original>D</original>
    <variation>Y</variation>
    <location>
        <position position="218"/>
    </location>
</feature>
<feature type="mutagenesis site" description="Slightly reduced activity." evidence="5">
    <original>F</original>
    <variation>Y</variation>
    <location>
        <position position="219"/>
    </location>
</feature>
<feature type="mutagenesis site" description="Slightly increased activity." evidence="5">
    <original>Y</original>
    <variation>F</variation>
    <location>
        <position position="226"/>
    </location>
</feature>
<feature type="mutagenesis site" description="Normal activity and acquired ability to produce tabersonine." evidence="5">
    <original>D</original>
    <variation>A</variation>
    <location>
        <position position="274"/>
    </location>
</feature>
<feature type="mutagenesis site" description="Slightly increased activity." evidence="5">
    <original>D</original>
    <variation>N</variation>
    <location>
        <position position="274"/>
    </location>
</feature>
<feature type="mutagenesis site" description="Normal activity." evidence="5">
    <original>Y</original>
    <variation>F</variation>
    <location>
        <position position="305"/>
    </location>
</feature>
<feature type="strand" evidence="11">
    <location>
        <begin position="12"/>
        <end position="16"/>
    </location>
</feature>
<feature type="turn" evidence="11">
    <location>
        <begin position="17"/>
        <end position="19"/>
    </location>
</feature>
<feature type="strand" evidence="11">
    <location>
        <begin position="20"/>
        <end position="23"/>
    </location>
</feature>
<feature type="strand" evidence="11">
    <location>
        <begin position="28"/>
        <end position="32"/>
    </location>
</feature>
<feature type="strand" evidence="11">
    <location>
        <begin position="40"/>
        <end position="42"/>
    </location>
</feature>
<feature type="turn" evidence="11">
    <location>
        <begin position="44"/>
        <end position="46"/>
    </location>
</feature>
<feature type="strand" evidence="11">
    <location>
        <begin position="49"/>
        <end position="58"/>
    </location>
</feature>
<feature type="strand" evidence="11">
    <location>
        <begin position="60"/>
        <end position="65"/>
    </location>
</feature>
<feature type="strand" evidence="11">
    <location>
        <begin position="74"/>
        <end position="80"/>
    </location>
</feature>
<feature type="turn" evidence="11">
    <location>
        <begin position="84"/>
        <end position="86"/>
    </location>
</feature>
<feature type="helix" evidence="11">
    <location>
        <begin position="93"/>
        <end position="106"/>
    </location>
</feature>
<feature type="strand" evidence="11">
    <location>
        <begin position="109"/>
        <end position="114"/>
    </location>
</feature>
<feature type="turn" evidence="11">
    <location>
        <begin position="118"/>
        <end position="120"/>
    </location>
</feature>
<feature type="helix" evidence="11">
    <location>
        <begin position="125"/>
        <end position="138"/>
    </location>
</feature>
<feature type="turn" evidence="11">
    <location>
        <begin position="139"/>
        <end position="142"/>
    </location>
</feature>
<feature type="helix" evidence="11">
    <location>
        <begin position="156"/>
        <end position="161"/>
    </location>
</feature>
<feature type="strand" evidence="11">
    <location>
        <begin position="162"/>
        <end position="172"/>
    </location>
</feature>
<feature type="helix" evidence="11">
    <location>
        <begin position="174"/>
        <end position="189"/>
    </location>
</feature>
<feature type="helix" evidence="11">
    <location>
        <begin position="192"/>
        <end position="194"/>
    </location>
</feature>
<feature type="strand" evidence="11">
    <location>
        <begin position="199"/>
        <end position="204"/>
    </location>
</feature>
<feature type="helix" evidence="11">
    <location>
        <begin position="217"/>
        <end position="230"/>
    </location>
</feature>
<feature type="helix" evidence="11">
    <location>
        <begin position="237"/>
        <end position="239"/>
    </location>
</feature>
<feature type="turn" evidence="11">
    <location>
        <begin position="241"/>
        <end position="243"/>
    </location>
</feature>
<feature type="helix" evidence="11">
    <location>
        <begin position="253"/>
        <end position="255"/>
    </location>
</feature>
<feature type="strand" evidence="11">
    <location>
        <begin position="259"/>
        <end position="265"/>
    </location>
</feature>
<feature type="strand" evidence="11">
    <location>
        <begin position="267"/>
        <end position="269"/>
    </location>
</feature>
<feature type="helix" evidence="11">
    <location>
        <begin position="277"/>
        <end position="289"/>
    </location>
</feature>
<feature type="strand" evidence="11">
    <location>
        <begin position="294"/>
        <end position="300"/>
    </location>
</feature>
<feature type="strand" evidence="11">
    <location>
        <begin position="302"/>
        <end position="304"/>
    </location>
</feature>
<feature type="helix" evidence="11">
    <location>
        <begin position="307"/>
        <end position="310"/>
    </location>
</feature>
<feature type="helix" evidence="11">
    <location>
        <begin position="314"/>
        <end position="326"/>
    </location>
</feature>
<reference key="1">
    <citation type="journal article" date="2018" name="Proc. Natl. Acad. Sci. U.S.A.">
        <title>Solution of the multistep pathway for assembly of corynanthean, strychnos, iboga, and aspidosperma monoterpenoid indole alkaloids from 19E-geissoschizine.</title>
        <authorList>
            <person name="Qu Y."/>
            <person name="Easson M.E.A.M."/>
            <person name="Simionescu R."/>
            <person name="Hajicek J."/>
            <person name="Thamm A.M.K."/>
            <person name="Salim V."/>
            <person name="De Luca V."/>
        </authorList>
    </citation>
    <scope>NUCLEOTIDE SEQUENCE [MRNA]</scope>
    <scope>FUNCTION</scope>
    <scope>DISRUPTION PHENOTYPE</scope>
    <scope>CATALYTIC ACTIVITY</scope>
    <scope>PATHWAY</scope>
</reference>
<reference key="2">
    <citation type="journal article" date="2019" name="Plant J.">
        <title>Completion of the canonical pathway for assembly of anticancer drugs vincristine/vinblastine in Catharanthus roseus.</title>
        <authorList>
            <person name="Qu Y."/>
            <person name="Safonova O."/>
            <person name="De Luca V."/>
        </authorList>
    </citation>
    <scope>TISSUE SPECIFICITY</scope>
    <source>
        <strain>cv. Little Delicata</strain>
    </source>
</reference>
<reference key="3">
    <citation type="journal article" date="2018" name="Science">
        <title>Missing enzymes in the biosynthesis of the anticancer drug vinblastine in Madagascar periwinkle.</title>
        <authorList>
            <person name="Caputi L."/>
            <person name="Franke J."/>
            <person name="Farrow S.C."/>
            <person name="Chung K."/>
            <person name="Payne R.M.E."/>
            <person name="Nguyen T.-D."/>
            <person name="Dang T.-T.T."/>
            <person name="Soares Teto Carqueijeiro I."/>
            <person name="Koudounas K."/>
            <person name="Duge de Bernonville T."/>
            <person name="Ameyaw B."/>
            <person name="Jones D.M."/>
            <person name="Vieira I.J.C."/>
            <person name="Courdavault V."/>
            <person name="O'Connor S.E."/>
        </authorList>
    </citation>
    <scope>FUNCTION</scope>
    <scope>DISRUPTION PHENOTYPE</scope>
    <scope>CATALYTIC ACTIVITY</scope>
    <scope>INTERACTION WITH DPAS</scope>
    <scope>SUBCELLULAR LOCATION</scope>
    <scope>PATHWAY</scope>
    <source>
        <strain>cv. Little Bright Eyes</strain>
    </source>
</reference>
<reference evidence="10" key="4">
    <citation type="journal article" date="2020" name="Nat. Chem. Biol.">
        <title>Structural basis of cycloaddition in biosynthesis of iboga and aspidosperma alkaloids.</title>
        <authorList>
            <person name="Caputi L."/>
            <person name="Franke J."/>
            <person name="Bussey K."/>
            <person name="Farrow S.C."/>
            <person name="Vieira I.J.C."/>
            <person name="Stevenson C.E.M."/>
            <person name="Lawson D.M."/>
            <person name="O'Connor S.E."/>
        </authorList>
    </citation>
    <scope>X-RAY CRYSTALLOGRAPHY (2.19 ANGSTROMS) OF 7-330 IN COMPLEX WITH CATHARANTHINE ANALOG</scope>
    <scope>FUNCTION</scope>
    <scope>MUTAGENESIS OF TYR-79; HIS-81; TYR-115; ASP-172; SER-173; PRO-174; TYR-204; ASP-218; PHE-219; TYR-226; ASP-274 AND TYR-305</scope>
    <scope>BIOPHYSICOCHEMICAL PROPERTIES</scope>
    <scope>ACTIVE SITES</scope>
    <scope>CATALYTIC ACTIVITY</scope>
    <scope>PATHWAY</scope>
</reference>
<protein>
    <recommendedName>
        <fullName evidence="7">Catharanthine synthase</fullName>
        <ecNumber evidence="2 3 5">5.5.1.37</ecNumber>
    </recommendedName>
    <alternativeName>
        <fullName evidence="6">Hydrolase 1</fullName>
        <shortName evidence="6">CrHL1</shortName>
    </alternativeName>
</protein>